<name>LISC_OSTLU</name>
<proteinExistence type="inferred from homology"/>
<dbReference type="EC" id="2.8.1.8" evidence="1"/>
<dbReference type="EMBL" id="CP000584">
    <property type="protein sequence ID" value="ABO95567.1"/>
    <property type="molecule type" value="Genomic_DNA"/>
</dbReference>
<dbReference type="RefSeq" id="XP_001417274.1">
    <property type="nucleotide sequence ID" value="XM_001417237.1"/>
</dbReference>
<dbReference type="SMR" id="A4RW69"/>
<dbReference type="STRING" id="436017.A4RW69"/>
<dbReference type="EnsemblPlants" id="ABO95567">
    <property type="protein sequence ID" value="ABO95567"/>
    <property type="gene ID" value="OSTLU_31232"/>
</dbReference>
<dbReference type="GeneID" id="5001263"/>
<dbReference type="Gramene" id="ABO95567">
    <property type="protein sequence ID" value="ABO95567"/>
    <property type="gene ID" value="OSTLU_31232"/>
</dbReference>
<dbReference type="KEGG" id="olu:OSTLU_31232"/>
<dbReference type="eggNOG" id="KOG2672">
    <property type="taxonomic scope" value="Eukaryota"/>
</dbReference>
<dbReference type="HOGENOM" id="CLU_033144_1_1_1"/>
<dbReference type="OMA" id="RSCAFCQ"/>
<dbReference type="OrthoDB" id="3231at2759"/>
<dbReference type="UniPathway" id="UPA00538">
    <property type="reaction ID" value="UER00593"/>
</dbReference>
<dbReference type="Proteomes" id="UP000001568">
    <property type="component" value="Chromosome 4"/>
</dbReference>
<dbReference type="GO" id="GO:0009507">
    <property type="term" value="C:chloroplast"/>
    <property type="evidence" value="ECO:0007669"/>
    <property type="project" value="UniProtKB-SubCell"/>
</dbReference>
<dbReference type="GO" id="GO:0005739">
    <property type="term" value="C:mitochondrion"/>
    <property type="evidence" value="ECO:0007669"/>
    <property type="project" value="TreeGrafter"/>
</dbReference>
<dbReference type="GO" id="GO:0051539">
    <property type="term" value="F:4 iron, 4 sulfur cluster binding"/>
    <property type="evidence" value="ECO:0007669"/>
    <property type="project" value="UniProtKB-UniRule"/>
</dbReference>
<dbReference type="GO" id="GO:0016992">
    <property type="term" value="F:lipoate synthase activity"/>
    <property type="evidence" value="ECO:0007669"/>
    <property type="project" value="UniProtKB-UniRule"/>
</dbReference>
<dbReference type="GO" id="GO:0046872">
    <property type="term" value="F:metal ion binding"/>
    <property type="evidence" value="ECO:0007669"/>
    <property type="project" value="UniProtKB-KW"/>
</dbReference>
<dbReference type="CDD" id="cd01335">
    <property type="entry name" value="Radical_SAM"/>
    <property type="match status" value="1"/>
</dbReference>
<dbReference type="FunFam" id="3.20.20.70:FF:000036">
    <property type="entry name" value="Lipoyl synthase, mitochondrial"/>
    <property type="match status" value="1"/>
</dbReference>
<dbReference type="Gene3D" id="3.20.20.70">
    <property type="entry name" value="Aldolase class I"/>
    <property type="match status" value="1"/>
</dbReference>
<dbReference type="HAMAP" id="MF_00206">
    <property type="entry name" value="Lipoyl_synth"/>
    <property type="match status" value="1"/>
</dbReference>
<dbReference type="HAMAP" id="MF_03129">
    <property type="entry name" value="Lipoyl_synth_plantC"/>
    <property type="match status" value="1"/>
</dbReference>
<dbReference type="InterPro" id="IPR013785">
    <property type="entry name" value="Aldolase_TIM"/>
</dbReference>
<dbReference type="InterPro" id="IPR006638">
    <property type="entry name" value="Elp3/MiaA/NifB-like_rSAM"/>
</dbReference>
<dbReference type="InterPro" id="IPR031691">
    <property type="entry name" value="LIAS_N"/>
</dbReference>
<dbReference type="InterPro" id="IPR003698">
    <property type="entry name" value="Lipoyl_synth"/>
</dbReference>
<dbReference type="InterPro" id="IPR027526">
    <property type="entry name" value="Lipoyl_synth_chlpt"/>
</dbReference>
<dbReference type="InterPro" id="IPR007197">
    <property type="entry name" value="rSAM"/>
</dbReference>
<dbReference type="NCBIfam" id="TIGR00510">
    <property type="entry name" value="lipA"/>
    <property type="match status" value="1"/>
</dbReference>
<dbReference type="NCBIfam" id="NF004019">
    <property type="entry name" value="PRK05481.1"/>
    <property type="match status" value="1"/>
</dbReference>
<dbReference type="NCBIfam" id="NF009544">
    <property type="entry name" value="PRK12928.1"/>
    <property type="match status" value="1"/>
</dbReference>
<dbReference type="PANTHER" id="PTHR10949">
    <property type="entry name" value="LIPOYL SYNTHASE"/>
    <property type="match status" value="1"/>
</dbReference>
<dbReference type="PANTHER" id="PTHR10949:SF38">
    <property type="entry name" value="LIPOYL SYNTHASE, CHLOROPLASTIC"/>
    <property type="match status" value="1"/>
</dbReference>
<dbReference type="Pfam" id="PF16881">
    <property type="entry name" value="LIAS_N"/>
    <property type="match status" value="1"/>
</dbReference>
<dbReference type="Pfam" id="PF04055">
    <property type="entry name" value="Radical_SAM"/>
    <property type="match status" value="1"/>
</dbReference>
<dbReference type="PIRSF" id="PIRSF005963">
    <property type="entry name" value="Lipoyl_synth"/>
    <property type="match status" value="1"/>
</dbReference>
<dbReference type="SFLD" id="SFLDF00271">
    <property type="entry name" value="lipoyl_synthase"/>
    <property type="match status" value="1"/>
</dbReference>
<dbReference type="SFLD" id="SFLDS00029">
    <property type="entry name" value="Radical_SAM"/>
    <property type="match status" value="1"/>
</dbReference>
<dbReference type="SMART" id="SM00729">
    <property type="entry name" value="Elp3"/>
    <property type="match status" value="1"/>
</dbReference>
<dbReference type="SUPFAM" id="SSF102114">
    <property type="entry name" value="Radical SAM enzymes"/>
    <property type="match status" value="1"/>
</dbReference>
<dbReference type="PROSITE" id="PS51918">
    <property type="entry name" value="RADICAL_SAM"/>
    <property type="match status" value="1"/>
</dbReference>
<reference key="1">
    <citation type="journal article" date="2007" name="Proc. Natl. Acad. Sci. U.S.A.">
        <title>The tiny eukaryote Ostreococcus provides genomic insights into the paradox of plankton speciation.</title>
        <authorList>
            <person name="Palenik B."/>
            <person name="Grimwood J."/>
            <person name="Aerts A."/>
            <person name="Rouze P."/>
            <person name="Salamov A."/>
            <person name="Putnam N."/>
            <person name="Dupont C."/>
            <person name="Jorgensen R."/>
            <person name="Derelle E."/>
            <person name="Rombauts S."/>
            <person name="Zhou K."/>
            <person name="Otillar R."/>
            <person name="Merchant S.S."/>
            <person name="Podell S."/>
            <person name="Gaasterland T."/>
            <person name="Napoli C."/>
            <person name="Gendler K."/>
            <person name="Manuell A."/>
            <person name="Tai V."/>
            <person name="Vallon O."/>
            <person name="Piganeau G."/>
            <person name="Jancek S."/>
            <person name="Heijde M."/>
            <person name="Jabbari K."/>
            <person name="Bowler C."/>
            <person name="Lohr M."/>
            <person name="Robbens S."/>
            <person name="Werner G."/>
            <person name="Dubchak I."/>
            <person name="Pazour G.J."/>
            <person name="Ren Q."/>
            <person name="Paulsen I."/>
            <person name="Delwiche C."/>
            <person name="Schmutz J."/>
            <person name="Rokhsar D."/>
            <person name="Van de Peer Y."/>
            <person name="Moreau H."/>
            <person name="Grigoriev I.V."/>
        </authorList>
    </citation>
    <scope>NUCLEOTIDE SEQUENCE [LARGE SCALE GENOMIC DNA]</scope>
    <source>
        <strain>CCE9901</strain>
    </source>
</reference>
<comment type="function">
    <text evidence="1">Catalyzes the radical-mediated insertion of two sulfur atoms into the C-6 and C-8 positions of the octanoyl moiety bound to the lipoyl domains of lipoate-dependent enzymes, thereby converting the octanoylated domains into lipoylated derivatives.</text>
</comment>
<comment type="catalytic activity">
    <reaction evidence="1">
        <text>[[Fe-S] cluster scaffold protein carrying a second [4Fe-4S](2+) cluster] + N(6)-octanoyl-L-lysyl-[protein] + 2 oxidized [2Fe-2S]-[ferredoxin] + 2 S-adenosyl-L-methionine + 4 H(+) = [[Fe-S] cluster scaffold protein] + N(6)-[(R)-dihydrolipoyl]-L-lysyl-[protein] + 4 Fe(3+) + 2 hydrogen sulfide + 2 5'-deoxyadenosine + 2 L-methionine + 2 reduced [2Fe-2S]-[ferredoxin]</text>
        <dbReference type="Rhea" id="RHEA:16585"/>
        <dbReference type="Rhea" id="RHEA-COMP:9928"/>
        <dbReference type="Rhea" id="RHEA-COMP:10000"/>
        <dbReference type="Rhea" id="RHEA-COMP:10001"/>
        <dbReference type="Rhea" id="RHEA-COMP:10475"/>
        <dbReference type="Rhea" id="RHEA-COMP:14568"/>
        <dbReference type="Rhea" id="RHEA-COMP:14569"/>
        <dbReference type="ChEBI" id="CHEBI:15378"/>
        <dbReference type="ChEBI" id="CHEBI:17319"/>
        <dbReference type="ChEBI" id="CHEBI:29034"/>
        <dbReference type="ChEBI" id="CHEBI:29919"/>
        <dbReference type="ChEBI" id="CHEBI:33722"/>
        <dbReference type="ChEBI" id="CHEBI:33737"/>
        <dbReference type="ChEBI" id="CHEBI:33738"/>
        <dbReference type="ChEBI" id="CHEBI:57844"/>
        <dbReference type="ChEBI" id="CHEBI:59789"/>
        <dbReference type="ChEBI" id="CHEBI:78809"/>
        <dbReference type="ChEBI" id="CHEBI:83100"/>
        <dbReference type="EC" id="2.8.1.8"/>
    </reaction>
</comment>
<comment type="cofactor">
    <cofactor evidence="1">
        <name>[4Fe-4S] cluster</name>
        <dbReference type="ChEBI" id="CHEBI:49883"/>
    </cofactor>
    <text evidence="1">Binds 2 [4Fe-4S] clusters per subunit. One cluster is coordinated with 3 cysteines and an exchangeable S-adenosyl-L-methionine.</text>
</comment>
<comment type="pathway">
    <text evidence="1">Protein modification; protein lipoylation via endogenous pathway; protein N(6)-(lipoyl)lysine from octanoyl-[acyl-carrier-protein]: step 2/2.</text>
</comment>
<comment type="subcellular location">
    <subcellularLocation>
        <location>Plastid</location>
        <location>Chloroplast</location>
    </subcellularLocation>
</comment>
<comment type="miscellaneous">
    <text evidence="1">This protein may be expected to contain an N-terminal transit peptide but none has been predicted.</text>
</comment>
<comment type="similarity">
    <text evidence="1">Belongs to the radical SAM superfamily. Lipoyl synthase family.</text>
</comment>
<organism>
    <name type="scientific">Ostreococcus lucimarinus (strain CCE9901)</name>
    <dbReference type="NCBI Taxonomy" id="436017"/>
    <lineage>
        <taxon>Eukaryota</taxon>
        <taxon>Viridiplantae</taxon>
        <taxon>Chlorophyta</taxon>
        <taxon>Mamiellophyceae</taxon>
        <taxon>Mamiellales</taxon>
        <taxon>Bathycoccaceae</taxon>
        <taxon>Ostreococcus</taxon>
    </lineage>
</organism>
<gene>
    <name evidence="1" type="primary">LIP1P</name>
    <name type="ORF">OSTLU_31232</name>
</gene>
<accession>A4RW69</accession>
<sequence>MCGPTATTVANAGTGGETIKGLPPGLKKPPWLRQRAPSGERFDYLSESLTGLKLNTVCEEAMCPNVGECWNGDTGTATVMLLGDTCTRGCRFCAVNTSQTPPPPDENEPENTAHAIAEWGVGYIVLTSVDRDDIPDGGSEHFARTVRTLKTIKSSVLVEALTPDFQGDMNAVAHLARSGLDVFAHNVETVERLQKRVRDPRANYEQSLAVLRHAKASKEGLVTKTSIMLGLGEEDEEIKQCMRACKEAGVDIFTLGQYLQPTPQHLPVKEFVTPEKFDFWKAYGEEVIGFRYVASGPLVRSSYKAGEFFIESMLRKDALDRGET</sequence>
<feature type="chain" id="PRO_0000398866" description="Lipoyl synthase, chloroplastic">
    <location>
        <begin position="1"/>
        <end position="324"/>
    </location>
</feature>
<feature type="domain" description="Radical SAM core" evidence="2">
    <location>
        <begin position="72"/>
        <end position="291"/>
    </location>
</feature>
<feature type="region of interest" description="Disordered" evidence="3">
    <location>
        <begin position="1"/>
        <end position="30"/>
    </location>
</feature>
<feature type="compositionally biased region" description="Low complexity" evidence="3">
    <location>
        <begin position="1"/>
        <end position="12"/>
    </location>
</feature>
<feature type="compositionally biased region" description="Low complexity" evidence="3">
    <location>
        <begin position="20"/>
        <end position="29"/>
    </location>
</feature>
<feature type="binding site" evidence="1">
    <location>
        <position position="58"/>
    </location>
    <ligand>
        <name>[4Fe-4S] cluster</name>
        <dbReference type="ChEBI" id="CHEBI:49883"/>
        <label>1</label>
    </ligand>
</feature>
<feature type="binding site" evidence="1">
    <location>
        <position position="63"/>
    </location>
    <ligand>
        <name>[4Fe-4S] cluster</name>
        <dbReference type="ChEBI" id="CHEBI:49883"/>
        <label>1</label>
    </ligand>
</feature>
<feature type="binding site" evidence="1">
    <location>
        <position position="69"/>
    </location>
    <ligand>
        <name>[4Fe-4S] cluster</name>
        <dbReference type="ChEBI" id="CHEBI:49883"/>
        <label>1</label>
    </ligand>
</feature>
<feature type="binding site" evidence="1">
    <location>
        <position position="86"/>
    </location>
    <ligand>
        <name>[4Fe-4S] cluster</name>
        <dbReference type="ChEBI" id="CHEBI:49883"/>
        <label>2</label>
        <note>4Fe-4S-S-AdoMet</note>
    </ligand>
</feature>
<feature type="binding site" evidence="1">
    <location>
        <position position="90"/>
    </location>
    <ligand>
        <name>[4Fe-4S] cluster</name>
        <dbReference type="ChEBI" id="CHEBI:49883"/>
        <label>2</label>
        <note>4Fe-4S-S-AdoMet</note>
    </ligand>
</feature>
<feature type="binding site" evidence="1">
    <location>
        <position position="93"/>
    </location>
    <ligand>
        <name>[4Fe-4S] cluster</name>
        <dbReference type="ChEBI" id="CHEBI:49883"/>
        <label>2</label>
        <note>4Fe-4S-S-AdoMet</note>
    </ligand>
</feature>
<feature type="binding site" evidence="1">
    <location>
        <position position="302"/>
    </location>
    <ligand>
        <name>[4Fe-4S] cluster</name>
        <dbReference type="ChEBI" id="CHEBI:49883"/>
        <label>1</label>
    </ligand>
</feature>
<keyword id="KW-0004">4Fe-4S</keyword>
<keyword id="KW-0150">Chloroplast</keyword>
<keyword id="KW-0408">Iron</keyword>
<keyword id="KW-0411">Iron-sulfur</keyword>
<keyword id="KW-0479">Metal-binding</keyword>
<keyword id="KW-0934">Plastid</keyword>
<keyword id="KW-1185">Reference proteome</keyword>
<keyword id="KW-0949">S-adenosyl-L-methionine</keyword>
<keyword id="KW-0808">Transferase</keyword>
<protein>
    <recommendedName>
        <fullName evidence="1">Lipoyl synthase, chloroplastic</fullName>
        <ecNumber evidence="1">2.8.1.8</ecNumber>
    </recommendedName>
    <alternativeName>
        <fullName evidence="1">Lipoate synthase</fullName>
        <shortName evidence="1">LS</shortName>
        <shortName evidence="1">Lip-syn</shortName>
    </alternativeName>
    <alternativeName>
        <fullName evidence="1">Lipoate synthase, plastidial</fullName>
        <shortName evidence="1">LIP1p</shortName>
    </alternativeName>
    <alternativeName>
        <fullName evidence="1">Lipoic acid synthase</fullName>
    </alternativeName>
</protein>
<evidence type="ECO:0000255" key="1">
    <source>
        <dbReference type="HAMAP-Rule" id="MF_03129"/>
    </source>
</evidence>
<evidence type="ECO:0000255" key="2">
    <source>
        <dbReference type="PROSITE-ProRule" id="PRU01266"/>
    </source>
</evidence>
<evidence type="ECO:0000256" key="3">
    <source>
        <dbReference type="SAM" id="MobiDB-lite"/>
    </source>
</evidence>